<keyword id="KW-0169">Cobalamin biosynthesis</keyword>
<keyword id="KW-0328">Glycosyltransferase</keyword>
<keyword id="KW-1185">Reference proteome</keyword>
<keyword id="KW-0808">Transferase</keyword>
<feature type="chain" id="PRO_1000071790" description="Nicotinate-nucleotide--dimethylbenzimidazole phosphoribosyltransferase">
    <location>
        <begin position="1"/>
        <end position="337"/>
    </location>
</feature>
<feature type="active site" description="Proton acceptor" evidence="1">
    <location>
        <position position="305"/>
    </location>
</feature>
<comment type="function">
    <text evidence="1">Catalyzes the synthesis of alpha-ribazole-5'-phosphate from nicotinate mononucleotide (NAMN) and 5,6-dimethylbenzimidazole (DMB).</text>
</comment>
<comment type="catalytic activity">
    <reaction evidence="1">
        <text>5,6-dimethylbenzimidazole + nicotinate beta-D-ribonucleotide = alpha-ribazole 5'-phosphate + nicotinate + H(+)</text>
        <dbReference type="Rhea" id="RHEA:11196"/>
        <dbReference type="ChEBI" id="CHEBI:15378"/>
        <dbReference type="ChEBI" id="CHEBI:15890"/>
        <dbReference type="ChEBI" id="CHEBI:32544"/>
        <dbReference type="ChEBI" id="CHEBI:57502"/>
        <dbReference type="ChEBI" id="CHEBI:57918"/>
        <dbReference type="EC" id="2.4.2.21"/>
    </reaction>
</comment>
<comment type="pathway">
    <text evidence="1">Nucleoside biosynthesis; alpha-ribazole biosynthesis; alpha-ribazole from 5,6-dimethylbenzimidazole: step 1/2.</text>
</comment>
<comment type="similarity">
    <text evidence="1">Belongs to the CobT family.</text>
</comment>
<name>COBT_ROSDO</name>
<organism>
    <name type="scientific">Roseobacter denitrificans (strain ATCC 33942 / OCh 114)</name>
    <name type="common">Erythrobacter sp. (strain OCh 114)</name>
    <name type="synonym">Roseobacter denitrificans</name>
    <dbReference type="NCBI Taxonomy" id="375451"/>
    <lineage>
        <taxon>Bacteria</taxon>
        <taxon>Pseudomonadati</taxon>
        <taxon>Pseudomonadota</taxon>
        <taxon>Alphaproteobacteria</taxon>
        <taxon>Rhodobacterales</taxon>
        <taxon>Roseobacteraceae</taxon>
        <taxon>Roseobacter</taxon>
    </lineage>
</organism>
<dbReference type="EC" id="2.4.2.21" evidence="1"/>
<dbReference type="EMBL" id="CP000362">
    <property type="protein sequence ID" value="ABG31443.1"/>
    <property type="molecule type" value="Genomic_DNA"/>
</dbReference>
<dbReference type="RefSeq" id="WP_011568062.1">
    <property type="nucleotide sequence ID" value="NC_008209.1"/>
</dbReference>
<dbReference type="SMR" id="Q169A0"/>
<dbReference type="STRING" id="375451.RD1_1827"/>
<dbReference type="KEGG" id="rde:RD1_1827"/>
<dbReference type="eggNOG" id="COG2038">
    <property type="taxonomic scope" value="Bacteria"/>
</dbReference>
<dbReference type="HOGENOM" id="CLU_002982_0_1_5"/>
<dbReference type="OrthoDB" id="9781491at2"/>
<dbReference type="UniPathway" id="UPA00061">
    <property type="reaction ID" value="UER00516"/>
</dbReference>
<dbReference type="Proteomes" id="UP000007029">
    <property type="component" value="Chromosome"/>
</dbReference>
<dbReference type="GO" id="GO:0008939">
    <property type="term" value="F:nicotinate-nucleotide-dimethylbenzimidazole phosphoribosyltransferase activity"/>
    <property type="evidence" value="ECO:0007669"/>
    <property type="project" value="UniProtKB-UniRule"/>
</dbReference>
<dbReference type="GO" id="GO:0009236">
    <property type="term" value="P:cobalamin biosynthetic process"/>
    <property type="evidence" value="ECO:0007669"/>
    <property type="project" value="UniProtKB-KW"/>
</dbReference>
<dbReference type="CDD" id="cd02439">
    <property type="entry name" value="DMB-PRT_CobT"/>
    <property type="match status" value="1"/>
</dbReference>
<dbReference type="Gene3D" id="1.10.1610.10">
    <property type="match status" value="1"/>
</dbReference>
<dbReference type="Gene3D" id="3.40.50.10210">
    <property type="match status" value="1"/>
</dbReference>
<dbReference type="HAMAP" id="MF_00230">
    <property type="entry name" value="CobT"/>
    <property type="match status" value="1"/>
</dbReference>
<dbReference type="InterPro" id="IPR003200">
    <property type="entry name" value="Nict_dMeBzImd_PRibTrfase"/>
</dbReference>
<dbReference type="InterPro" id="IPR017846">
    <property type="entry name" value="Nict_dMeBzImd_PRibTrfase_bact"/>
</dbReference>
<dbReference type="InterPro" id="IPR023195">
    <property type="entry name" value="Nict_dMeBzImd_PRibTrfase_N"/>
</dbReference>
<dbReference type="InterPro" id="IPR036087">
    <property type="entry name" value="Nict_dMeBzImd_PRibTrfase_sf"/>
</dbReference>
<dbReference type="NCBIfam" id="TIGR03160">
    <property type="entry name" value="cobT_DBIPRT"/>
    <property type="match status" value="1"/>
</dbReference>
<dbReference type="NCBIfam" id="NF000996">
    <property type="entry name" value="PRK00105.1"/>
    <property type="match status" value="1"/>
</dbReference>
<dbReference type="PANTHER" id="PTHR43463">
    <property type="entry name" value="NICOTINATE-NUCLEOTIDE--DIMETHYLBENZIMIDAZOLE PHOSPHORIBOSYLTRANSFERASE"/>
    <property type="match status" value="1"/>
</dbReference>
<dbReference type="PANTHER" id="PTHR43463:SF1">
    <property type="entry name" value="NICOTINATE-NUCLEOTIDE--DIMETHYLBENZIMIDAZOLE PHOSPHORIBOSYLTRANSFERASE"/>
    <property type="match status" value="1"/>
</dbReference>
<dbReference type="Pfam" id="PF02277">
    <property type="entry name" value="DBI_PRT"/>
    <property type="match status" value="1"/>
</dbReference>
<dbReference type="SUPFAM" id="SSF52733">
    <property type="entry name" value="Nicotinate mononucleotide:5,6-dimethylbenzimidazole phosphoribosyltransferase (CobT)"/>
    <property type="match status" value="1"/>
</dbReference>
<protein>
    <recommendedName>
        <fullName evidence="1">Nicotinate-nucleotide--dimethylbenzimidazole phosphoribosyltransferase</fullName>
        <shortName evidence="1">NN:DBI PRT</shortName>
        <ecNumber evidence="1">2.4.2.21</ecNumber>
    </recommendedName>
    <alternativeName>
        <fullName evidence="1">N(1)-alpha-phosphoribosyltransferase</fullName>
    </alternativeName>
</protein>
<reference key="1">
    <citation type="journal article" date="2007" name="J. Bacteriol.">
        <title>The complete genome sequence of Roseobacter denitrificans reveals a mixotrophic rather than photosynthetic metabolism.</title>
        <authorList>
            <person name="Swingley W.D."/>
            <person name="Sadekar S."/>
            <person name="Mastrian S.D."/>
            <person name="Matthies H.J."/>
            <person name="Hao J."/>
            <person name="Ramos H."/>
            <person name="Acharya C.R."/>
            <person name="Conrad A.L."/>
            <person name="Taylor H.L."/>
            <person name="Dejesa L.C."/>
            <person name="Shah M.K."/>
            <person name="O'Huallachain M.E."/>
            <person name="Lince M.T."/>
            <person name="Blankenship R.E."/>
            <person name="Beatty J.T."/>
            <person name="Touchman J.W."/>
        </authorList>
    </citation>
    <scope>NUCLEOTIDE SEQUENCE [LARGE SCALE GENOMIC DNA]</scope>
    <source>
        <strain>ATCC 33942 / OCh 114</strain>
    </source>
</reference>
<proteinExistence type="inferred from homology"/>
<accession>Q169A0</accession>
<evidence type="ECO:0000255" key="1">
    <source>
        <dbReference type="HAMAP-Rule" id="MF_00230"/>
    </source>
</evidence>
<sequence length="337" mass="34236">MTAAFSTLDEVRDILRALPESDAESIDDAAARNGQLTKPPGALGRLEALAIWYAGWRGVATPRIETPQIIVFAGNHGIAAQGVSAFPAEVTAQMVLNFQHGGAAINQLAATFGAKLDVHALALEQPTADFTQAPAMSEAEVIDALHTGWQAVDAAADVLIVGEMGIGNTTCAAALAAACFGGAPADWVGRGTGVDDAGLAIKQRVVAEGLARHATVHDGLEKLRCLGGREVAAMAGAILRARVLRIPVLLDGFICCAAAGSLMHTAPDALEHCVAGHLSAEGSHDRLLQAIGKPPLLSLGLRLGEASGAALSLAVLQGAVACLSGMATFAEAGVADG</sequence>
<gene>
    <name evidence="1" type="primary">cobT</name>
    <name type="ordered locus">RD1_1827</name>
</gene>